<protein>
    <recommendedName>
        <fullName evidence="1">Small ribosomal subunit protein bS21</fullName>
    </recommendedName>
    <alternativeName>
        <fullName evidence="2">30S ribosomal protein S21</fullName>
    </alternativeName>
</protein>
<keyword id="KW-1185">Reference proteome</keyword>
<keyword id="KW-0687">Ribonucleoprotein</keyword>
<keyword id="KW-0689">Ribosomal protein</keyword>
<proteinExistence type="inferred from homology"/>
<feature type="chain" id="PRO_1000005149" description="Small ribosomal subunit protein bS21">
    <location>
        <begin position="1"/>
        <end position="58"/>
    </location>
</feature>
<gene>
    <name evidence="1" type="primary">rpsU</name>
    <name evidence="1" type="synonym">rps21</name>
    <name type="ordered locus">P9301_10681</name>
</gene>
<accession>A3PD66</accession>
<dbReference type="EMBL" id="CP000576">
    <property type="protein sequence ID" value="ABO17691.1"/>
    <property type="molecule type" value="Genomic_DNA"/>
</dbReference>
<dbReference type="RefSeq" id="WP_011863032.1">
    <property type="nucleotide sequence ID" value="NC_009091.1"/>
</dbReference>
<dbReference type="SMR" id="A3PD66"/>
<dbReference type="STRING" id="167546.P9301_10681"/>
<dbReference type="KEGG" id="pmg:P9301_10681"/>
<dbReference type="eggNOG" id="COG0828">
    <property type="taxonomic scope" value="Bacteria"/>
</dbReference>
<dbReference type="HOGENOM" id="CLU_159258_3_1_3"/>
<dbReference type="OrthoDB" id="9799244at2"/>
<dbReference type="Proteomes" id="UP000001430">
    <property type="component" value="Chromosome"/>
</dbReference>
<dbReference type="GO" id="GO:1990904">
    <property type="term" value="C:ribonucleoprotein complex"/>
    <property type="evidence" value="ECO:0007669"/>
    <property type="project" value="UniProtKB-KW"/>
</dbReference>
<dbReference type="GO" id="GO:0005840">
    <property type="term" value="C:ribosome"/>
    <property type="evidence" value="ECO:0007669"/>
    <property type="project" value="UniProtKB-KW"/>
</dbReference>
<dbReference type="GO" id="GO:0003735">
    <property type="term" value="F:structural constituent of ribosome"/>
    <property type="evidence" value="ECO:0007669"/>
    <property type="project" value="InterPro"/>
</dbReference>
<dbReference type="GO" id="GO:0006412">
    <property type="term" value="P:translation"/>
    <property type="evidence" value="ECO:0007669"/>
    <property type="project" value="UniProtKB-UniRule"/>
</dbReference>
<dbReference type="Gene3D" id="1.20.5.1150">
    <property type="entry name" value="Ribosomal protein S8"/>
    <property type="match status" value="1"/>
</dbReference>
<dbReference type="HAMAP" id="MF_00358">
    <property type="entry name" value="Ribosomal_bS21"/>
    <property type="match status" value="1"/>
</dbReference>
<dbReference type="InterPro" id="IPR001911">
    <property type="entry name" value="Ribosomal_bS21"/>
</dbReference>
<dbReference type="InterPro" id="IPR018278">
    <property type="entry name" value="Ribosomal_bS21_CS"/>
</dbReference>
<dbReference type="InterPro" id="IPR038380">
    <property type="entry name" value="Ribosomal_bS21_sf"/>
</dbReference>
<dbReference type="NCBIfam" id="TIGR00030">
    <property type="entry name" value="S21p"/>
    <property type="match status" value="1"/>
</dbReference>
<dbReference type="PANTHER" id="PTHR21109">
    <property type="entry name" value="MITOCHONDRIAL 28S RIBOSOMAL PROTEIN S21"/>
    <property type="match status" value="1"/>
</dbReference>
<dbReference type="PANTHER" id="PTHR21109:SF0">
    <property type="entry name" value="SMALL RIBOSOMAL SUBUNIT PROTEIN BS21M"/>
    <property type="match status" value="1"/>
</dbReference>
<dbReference type="Pfam" id="PF01165">
    <property type="entry name" value="Ribosomal_S21"/>
    <property type="match status" value="1"/>
</dbReference>
<dbReference type="PRINTS" id="PR00976">
    <property type="entry name" value="RIBOSOMALS21"/>
</dbReference>
<dbReference type="PROSITE" id="PS01181">
    <property type="entry name" value="RIBOSOMAL_S21"/>
    <property type="match status" value="1"/>
</dbReference>
<reference key="1">
    <citation type="journal article" date="2007" name="PLoS Genet.">
        <title>Patterns and implications of gene gain and loss in the evolution of Prochlorococcus.</title>
        <authorList>
            <person name="Kettler G.C."/>
            <person name="Martiny A.C."/>
            <person name="Huang K."/>
            <person name="Zucker J."/>
            <person name="Coleman M.L."/>
            <person name="Rodrigue S."/>
            <person name="Chen F."/>
            <person name="Lapidus A."/>
            <person name="Ferriera S."/>
            <person name="Johnson J."/>
            <person name="Steglich C."/>
            <person name="Church G.M."/>
            <person name="Richardson P."/>
            <person name="Chisholm S.W."/>
        </authorList>
    </citation>
    <scope>NUCLEOTIDE SEQUENCE [LARGE SCALE GENOMIC DNA]</scope>
    <source>
        <strain>MIT 9301</strain>
    </source>
</reference>
<name>RS21_PROM0</name>
<evidence type="ECO:0000255" key="1">
    <source>
        <dbReference type="HAMAP-Rule" id="MF_00358"/>
    </source>
</evidence>
<evidence type="ECO:0000305" key="2"/>
<organism>
    <name type="scientific">Prochlorococcus marinus (strain MIT 9301)</name>
    <dbReference type="NCBI Taxonomy" id="167546"/>
    <lineage>
        <taxon>Bacteria</taxon>
        <taxon>Bacillati</taxon>
        <taxon>Cyanobacteriota</taxon>
        <taxon>Cyanophyceae</taxon>
        <taxon>Synechococcales</taxon>
        <taxon>Prochlorococcaceae</taxon>
        <taxon>Prochlorococcus</taxon>
    </lineage>
</organism>
<comment type="similarity">
    <text evidence="1">Belongs to the bacterial ribosomal protein bS21 family.</text>
</comment>
<sequence>MTQVTVGENEGIESALRRFKRQVSKSGIFADLKRLRHHETPVEKYKRKLQQRRKARRR</sequence>